<gene>
    <name type="primary">fpoI</name>
    <name type="ordered locus">MM_2486</name>
</gene>
<reference key="1">
    <citation type="journal article" date="1997" name="FEMS Microbiol. Lett.">
        <title>Purification and properties of an F420H2 dehydrogenase from Methanosarcina mazei Go1.</title>
        <authorList>
            <person name="Abken H.-J."/>
            <person name="Deppenmeier U."/>
        </authorList>
    </citation>
    <scope>NUCLEOTIDE SEQUENCE [GENOMIC DNA]</scope>
    <scope>FUNCTION</scope>
    <scope>CATALYTIC ACTIVITY</scope>
    <scope>BIOPHYSICOCHEMICAL PROPERTIES</scope>
    <scope>COFACTOR</scope>
    <scope>SUBSTRATE SPECIFICITY</scope>
    <source>
        <strain>ATCC BAA-159 / DSM 3647 / Goe1 / Go1 / JCM 11833 / OCM 88</strain>
    </source>
</reference>
<reference key="2">
    <citation type="journal article" date="2000" name="J. Biol. Chem.">
        <title>The F420H2 dehydrogenase from Methanosarcina mazei is a Redox-driven proton pump closely related to NADH dehydrogenases.</title>
        <authorList>
            <person name="Baumer S."/>
            <person name="Ide T."/>
            <person name="Jacobi C."/>
            <person name="Johann A."/>
            <person name="Gottschalk G."/>
            <person name="Deppenmeier U."/>
        </authorList>
    </citation>
    <scope>NUCLEOTIDE SEQUENCE [GENOMIC DNA]</scope>
    <scope>PROTEIN SEQUENCE</scope>
    <scope>FUNCTION IN THE PROTON TRANSLOCATION</scope>
    <scope>SUBUNIT</scope>
    <source>
        <strain>ATCC BAA-159 / DSM 3647 / Goe1 / Go1 / JCM 11833 / OCM 88</strain>
    </source>
</reference>
<reference key="3">
    <citation type="journal article" date="2002" name="J. Mol. Microbiol. Biotechnol.">
        <title>The genome of Methanosarcina mazei: evidence for lateral gene transfer between Bacteria and Archaea.</title>
        <authorList>
            <person name="Deppenmeier U."/>
            <person name="Johann A."/>
            <person name="Hartsch T."/>
            <person name="Merkl R."/>
            <person name="Schmitz R.A."/>
            <person name="Martinez-Arias R."/>
            <person name="Henne A."/>
            <person name="Wiezer A."/>
            <person name="Baeumer S."/>
            <person name="Jacobi C."/>
            <person name="Brueggemann H."/>
            <person name="Lienard T."/>
            <person name="Christmann A."/>
            <person name="Boemecke M."/>
            <person name="Steckel S."/>
            <person name="Bhattacharyya A."/>
            <person name="Lykidis A."/>
            <person name="Overbeek R."/>
            <person name="Klenk H.-P."/>
            <person name="Gunsalus R.P."/>
            <person name="Fritz H.-J."/>
            <person name="Gottschalk G."/>
        </authorList>
    </citation>
    <scope>NUCLEOTIDE SEQUENCE [LARGE SCALE GENOMIC DNA]</scope>
    <source>
        <strain>ATCC BAA-159 / DSM 3647 / Goe1 / Go1 / JCM 11833 / OCM 88</strain>
    </source>
</reference>
<feature type="chain" id="PRO_0000423965" description="F(420)H(2) dehydrogenase subunit I">
    <location>
        <begin position="1"/>
        <end position="177"/>
    </location>
</feature>
<feature type="domain" description="4Fe-4S ferredoxin-type 1" evidence="2">
    <location>
        <begin position="76"/>
        <end position="105"/>
    </location>
</feature>
<feature type="domain" description="4Fe-4S ferredoxin-type 2" evidence="2">
    <location>
        <begin position="116"/>
        <end position="145"/>
    </location>
</feature>
<feature type="region of interest" description="Disordered" evidence="3">
    <location>
        <begin position="1"/>
        <end position="21"/>
    </location>
</feature>
<feature type="binding site" evidence="1">
    <location>
        <position position="85"/>
    </location>
    <ligand>
        <name>[4Fe-4S] cluster</name>
        <dbReference type="ChEBI" id="CHEBI:49883"/>
        <label>1</label>
    </ligand>
</feature>
<feature type="binding site" evidence="1">
    <location>
        <position position="88"/>
    </location>
    <ligand>
        <name>[4Fe-4S] cluster</name>
        <dbReference type="ChEBI" id="CHEBI:49883"/>
        <label>1</label>
    </ligand>
</feature>
<feature type="binding site" evidence="1">
    <location>
        <position position="91"/>
    </location>
    <ligand>
        <name>[4Fe-4S] cluster</name>
        <dbReference type="ChEBI" id="CHEBI:49883"/>
        <label>1</label>
    </ligand>
</feature>
<feature type="binding site" evidence="1">
    <location>
        <position position="95"/>
    </location>
    <ligand>
        <name>[4Fe-4S] cluster</name>
        <dbReference type="ChEBI" id="CHEBI:49883"/>
        <label>2</label>
    </ligand>
</feature>
<feature type="binding site" evidence="1">
    <location>
        <position position="125"/>
    </location>
    <ligand>
        <name>[4Fe-4S] cluster</name>
        <dbReference type="ChEBI" id="CHEBI:49883"/>
        <label>2</label>
    </ligand>
</feature>
<feature type="binding site" evidence="1">
    <location>
        <position position="128"/>
    </location>
    <ligand>
        <name>[4Fe-4S] cluster</name>
        <dbReference type="ChEBI" id="CHEBI:49883"/>
        <label>2</label>
    </ligand>
</feature>
<feature type="binding site" evidence="1">
    <location>
        <position position="131"/>
    </location>
    <ligand>
        <name>[4Fe-4S] cluster</name>
        <dbReference type="ChEBI" id="CHEBI:49883"/>
        <label>2</label>
    </ligand>
</feature>
<feature type="binding site" evidence="1">
    <location>
        <position position="135"/>
    </location>
    <ligand>
        <name>[4Fe-4S] cluster</name>
        <dbReference type="ChEBI" id="CHEBI:49883"/>
        <label>1</label>
    </ligand>
</feature>
<comment type="function">
    <text evidence="4 5">Component of the F(420)H(2) dehydrogenase (FPO complex) which is part of the energy-conserving F(420)H(2):heterodisulfide oxidoreductase system. The membrane-bound electron transfer system of the complex plays an important role in the metabolism of methylotrophic methanogens when the organisms grow on methanol or methylamines. Catalyzes the oxidation of methanophenazine to dihydromethanophenazine. It shuttles electrons from F(420)H(2), via FAD and iron-sulfur (Fe-S) centers, to methanophenazine (an electron carrier in the membrane). It couples the redox reaction to proton translocation (for every two electrons transferred, two hydrogen ions are translocated across the cytoplasmic membrane), and thus conserves the redox energy in a proton gradient. It also catalyzes the oxidation of F(420)H(2) with quinones such as 2,3-dimethyl-1,4-naphthoquinone, 2-methyl-1,4-naphthoquinone and tetramethyl-p-benzoquinone.</text>
</comment>
<comment type="catalytic activity">
    <reaction evidence="5">
        <text>methanophenazine + reduced coenzyme F420-(gamma-L-Glu)(n) = dihydromethanophenazine + oxidized coenzyme F420-(gamma-L-Glu)(n) + H(+)</text>
        <dbReference type="Rhea" id="RHEA:54752"/>
        <dbReference type="Rhea" id="RHEA-COMP:12939"/>
        <dbReference type="Rhea" id="RHEA-COMP:14378"/>
        <dbReference type="ChEBI" id="CHEBI:15378"/>
        <dbReference type="ChEBI" id="CHEBI:29118"/>
        <dbReference type="ChEBI" id="CHEBI:50375"/>
        <dbReference type="ChEBI" id="CHEBI:133980"/>
        <dbReference type="ChEBI" id="CHEBI:139511"/>
        <dbReference type="EC" id="1.5.98.3"/>
    </reaction>
</comment>
<comment type="cofactor">
    <cofactor evidence="1">
        <name>[4Fe-4S] cluster</name>
        <dbReference type="ChEBI" id="CHEBI:49883"/>
    </cofactor>
    <text evidence="1">Binds 2 [4Fe-4S] cluster.</text>
</comment>
<comment type="biophysicochemical properties">
    <kinetics>
        <KM evidence="5">7 uM for F(420)H(2) (at 37 degrees Celsius and pH 7)</KM>
        <Vmax evidence="5">17.0 umol/min/mg enzyme (at 37 degrees Celsius and pH 7)</Vmax>
        <text>Measured for the whole complex.</text>
    </kinetics>
    <phDependence>
        <text evidence="5">Optimum pH is 8.5.</text>
    </phDependence>
    <temperatureDependence>
        <text evidence="5">Optimum temperature is 39 degrees Celsius.</text>
    </temperatureDependence>
</comment>
<comment type="subunit">
    <text evidence="4">The FPO complex is composed of at least 13 different subunits.</text>
</comment>
<comment type="similarity">
    <text evidence="6">Belongs to the complex I 23 kDa subunit family.</text>
</comment>
<comment type="sequence caution" evidence="6">
    <conflict type="erroneous initiation">
        <sequence resource="EMBL-CDS" id="AAF65736"/>
    </conflict>
    <text>Truncated N-terminus.</text>
</comment>
<protein>
    <recommendedName>
        <fullName>F(420)H(2) dehydrogenase subunit I</fullName>
        <ecNumber evidence="5">1.5.98.3</ecNumber>
    </recommendedName>
    <alternativeName>
        <fullName>F(420)H(2)-dependent phenazine dehydrogenase subunit I</fullName>
    </alternativeName>
    <alternativeName>
        <fullName>F(420)H(2)-dependent phenazine oxidoreductase subunit I</fullName>
        <shortName>FPO subunit I</shortName>
    </alternativeName>
    <alternativeName>
        <fullName>Methanophenazine hydrogenase subunit I</fullName>
    </alternativeName>
    <alternativeName>
        <fullName>Methanosarcina-phenazine hydrogenase subunit I</fullName>
    </alternativeName>
</protein>
<organism>
    <name type="scientific">Methanosarcina mazei (strain ATCC BAA-159 / DSM 3647 / Goe1 / Go1 / JCM 11833 / OCM 88)</name>
    <name type="common">Methanosarcina frisia</name>
    <dbReference type="NCBI Taxonomy" id="192952"/>
    <lineage>
        <taxon>Archaea</taxon>
        <taxon>Methanobacteriati</taxon>
        <taxon>Methanobacteriota</taxon>
        <taxon>Stenosarchaea group</taxon>
        <taxon>Methanomicrobia</taxon>
        <taxon>Methanosarcinales</taxon>
        <taxon>Methanosarcinaceae</taxon>
        <taxon>Methanosarcina</taxon>
    </lineage>
</organism>
<proteinExistence type="evidence at protein level"/>
<evidence type="ECO:0000250" key="1"/>
<evidence type="ECO:0000255" key="2">
    <source>
        <dbReference type="PROSITE-ProRule" id="PRU00711"/>
    </source>
</evidence>
<evidence type="ECO:0000256" key="3">
    <source>
        <dbReference type="SAM" id="MobiDB-lite"/>
    </source>
</evidence>
<evidence type="ECO:0000269" key="4">
    <source>
    </source>
</evidence>
<evidence type="ECO:0000269" key="5">
    <source ref="1"/>
</evidence>
<evidence type="ECO:0000305" key="6"/>
<name>FPOI_METMA</name>
<dbReference type="EC" id="1.5.98.3" evidence="5"/>
<dbReference type="EMBL" id="AF228525">
    <property type="protein sequence ID" value="AAF65736.1"/>
    <property type="status" value="ALT_INIT"/>
    <property type="molecule type" value="Genomic_DNA"/>
</dbReference>
<dbReference type="EMBL" id="AE008384">
    <property type="protein sequence ID" value="AAM32182.1"/>
    <property type="molecule type" value="Genomic_DNA"/>
</dbReference>
<dbReference type="SMR" id="Q8PU60"/>
<dbReference type="TCDB" id="3.D.9.1.1">
    <property type="family name" value="the h(+)-translocating f420h2 dehydrogenase (f420h2dh) family"/>
</dbReference>
<dbReference type="KEGG" id="mma:MM_2486"/>
<dbReference type="PATRIC" id="fig|192952.21.peg.2845"/>
<dbReference type="eggNOG" id="arCOG01543">
    <property type="taxonomic scope" value="Archaea"/>
</dbReference>
<dbReference type="HOGENOM" id="CLU_067218_4_5_2"/>
<dbReference type="BioCyc" id="MetaCyc:MONOMER-12226"/>
<dbReference type="BRENDA" id="1.12.98.3">
    <property type="organism ID" value="3270"/>
</dbReference>
<dbReference type="Proteomes" id="UP000000595">
    <property type="component" value="Chromosome"/>
</dbReference>
<dbReference type="GO" id="GO:0016020">
    <property type="term" value="C:membrane"/>
    <property type="evidence" value="ECO:0007669"/>
    <property type="project" value="InterPro"/>
</dbReference>
<dbReference type="GO" id="GO:0051539">
    <property type="term" value="F:4 iron, 4 sulfur cluster binding"/>
    <property type="evidence" value="ECO:0007669"/>
    <property type="project" value="UniProtKB-KW"/>
</dbReference>
<dbReference type="GO" id="GO:0046872">
    <property type="term" value="F:metal ion binding"/>
    <property type="evidence" value="ECO:0007669"/>
    <property type="project" value="UniProtKB-KW"/>
</dbReference>
<dbReference type="GO" id="GO:0051911">
    <property type="term" value="F:Methanosarcina-phenazine hydrogenase activity"/>
    <property type="evidence" value="ECO:0007669"/>
    <property type="project" value="UniProtKB-EC"/>
</dbReference>
<dbReference type="GO" id="GO:0003954">
    <property type="term" value="F:NADH dehydrogenase activity"/>
    <property type="evidence" value="ECO:0007669"/>
    <property type="project" value="TreeGrafter"/>
</dbReference>
<dbReference type="GO" id="GO:0043738">
    <property type="term" value="F:reduced coenzyme F420 dehydrogenase activity"/>
    <property type="evidence" value="ECO:0007669"/>
    <property type="project" value="RHEA"/>
</dbReference>
<dbReference type="GO" id="GO:0009060">
    <property type="term" value="P:aerobic respiration"/>
    <property type="evidence" value="ECO:0007669"/>
    <property type="project" value="TreeGrafter"/>
</dbReference>
<dbReference type="GO" id="GO:0015948">
    <property type="term" value="P:methanogenesis"/>
    <property type="evidence" value="ECO:0007669"/>
    <property type="project" value="UniProtKB-KW"/>
</dbReference>
<dbReference type="GO" id="GO:0015945">
    <property type="term" value="P:methanol metabolic process"/>
    <property type="evidence" value="ECO:0007669"/>
    <property type="project" value="UniProtKB-KW"/>
</dbReference>
<dbReference type="Gene3D" id="3.30.70.3270">
    <property type="match status" value="1"/>
</dbReference>
<dbReference type="InterPro" id="IPR017896">
    <property type="entry name" value="4Fe4S_Fe-S-bd"/>
</dbReference>
<dbReference type="InterPro" id="IPR017900">
    <property type="entry name" value="4Fe4S_Fe_S_CS"/>
</dbReference>
<dbReference type="InterPro" id="IPR053604">
    <property type="entry name" value="F420H2_dehydrogenase_I"/>
</dbReference>
<dbReference type="InterPro" id="IPR010226">
    <property type="entry name" value="NADH_quinone_OxRdtase_chainI"/>
</dbReference>
<dbReference type="NCBIfam" id="NF040612">
    <property type="entry name" value="F420_dehyd_FpoI"/>
    <property type="match status" value="1"/>
</dbReference>
<dbReference type="PANTHER" id="PTHR10849:SF35">
    <property type="entry name" value="FORMATE HYDROGENLYASE SUBUNIT 6-RELATED"/>
    <property type="match status" value="1"/>
</dbReference>
<dbReference type="PANTHER" id="PTHR10849">
    <property type="entry name" value="NADH DEHYDROGENASE UBIQUINONE IRON-SULFUR PROTEIN 8, MITOCHONDRIAL"/>
    <property type="match status" value="1"/>
</dbReference>
<dbReference type="Pfam" id="PF12838">
    <property type="entry name" value="Fer4_7"/>
    <property type="match status" value="1"/>
</dbReference>
<dbReference type="SUPFAM" id="SSF54862">
    <property type="entry name" value="4Fe-4S ferredoxins"/>
    <property type="match status" value="1"/>
</dbReference>
<dbReference type="PROSITE" id="PS00198">
    <property type="entry name" value="4FE4S_FER_1"/>
    <property type="match status" value="2"/>
</dbReference>
<dbReference type="PROSITE" id="PS51379">
    <property type="entry name" value="4FE4S_FER_2"/>
    <property type="match status" value="2"/>
</dbReference>
<accession>Q8PU60</accession>
<accession>Q9P9F8</accession>
<sequence>MGCPEVQDRPGSGYELEETPAPVPVEPCLGSRPWTLSGGLSMVLKNIKYALKNIPKERVTRLCPEVESPLSERFRGLQTLDKSKCIGCGICANTCPNSAIKIVKAPIAPGSEKKRWFPQIDIGHCLFCGLCIDQCPKGALSSGKEYCKGMVKWAHKDLLMTPEKLAREVDIQEGDER</sequence>
<keyword id="KW-0004">4Fe-4S</keyword>
<keyword id="KW-0903">Direct protein sequencing</keyword>
<keyword id="KW-0249">Electron transport</keyword>
<keyword id="KW-0408">Iron</keyword>
<keyword id="KW-0411">Iron-sulfur</keyword>
<keyword id="KW-0479">Metal-binding</keyword>
<keyword id="KW-0484">Methanogenesis</keyword>
<keyword id="KW-0485">Methanol utilization</keyword>
<keyword id="KW-0560">Oxidoreductase</keyword>
<keyword id="KW-0677">Repeat</keyword>
<keyword id="KW-0813">Transport</keyword>